<keyword id="KW-1015">Disulfide bond</keyword>
<keyword id="KW-0325">Glycoprotein</keyword>
<keyword id="KW-0358">Heparin-binding</keyword>
<keyword id="KW-0393">Immunoglobulin domain</keyword>
<keyword id="KW-0472">Membrane</keyword>
<keyword id="KW-0654">Proteoglycan</keyword>
<keyword id="KW-1185">Reference proteome</keyword>
<keyword id="KW-0677">Repeat</keyword>
<keyword id="KW-0732">Signal</keyword>
<keyword id="KW-0812">Transmembrane</keyword>
<keyword id="KW-1133">Transmembrane helix</keyword>
<reference evidence="7" key="1">
    <citation type="journal article" date="2007" name="Nature">
        <title>Evolution of genes and genomes on the Drosophila phylogeny.</title>
        <authorList>
            <consortium name="Drosophila 12 genomes consortium"/>
        </authorList>
    </citation>
    <scope>NUCLEOTIDE SEQUENCE [LARGE SCALE GENOMIC DNA]</scope>
    <source>
        <strain evidence="7">Tucson 15287-2541.00</strain>
    </source>
</reference>
<dbReference type="EMBL" id="CH916368">
    <property type="protein sequence ID" value="EDW03672.1"/>
    <property type="molecule type" value="Genomic_DNA"/>
</dbReference>
<dbReference type="SMR" id="B4JEF2"/>
<dbReference type="FunCoup" id="B4JEF2">
    <property type="interactions" value="40"/>
</dbReference>
<dbReference type="STRING" id="7222.B4JEF2"/>
<dbReference type="GlyCosmos" id="B4JEF2">
    <property type="glycosylation" value="11 sites, No reported glycans"/>
</dbReference>
<dbReference type="EnsemblMetazoa" id="FBtr0146776">
    <property type="protein sequence ID" value="FBpp0145268"/>
    <property type="gene ID" value="FBgn0118842"/>
</dbReference>
<dbReference type="EnsemblMetazoa" id="FBtr0458063">
    <property type="protein sequence ID" value="FBpp0408563"/>
    <property type="gene ID" value="FBgn0118842"/>
</dbReference>
<dbReference type="EnsemblMetazoa" id="XM_001988769.3">
    <property type="protein sequence ID" value="XP_001988805.1"/>
    <property type="gene ID" value="LOC6561666"/>
</dbReference>
<dbReference type="EnsemblMetazoa" id="XM_032736522.2">
    <property type="protein sequence ID" value="XP_032592413.1"/>
    <property type="gene ID" value="LOC6561666"/>
</dbReference>
<dbReference type="GeneID" id="6561666"/>
<dbReference type="KEGG" id="dgr:6561666"/>
<dbReference type="eggNOG" id="ENOG502QSGM">
    <property type="taxonomic scope" value="Eukaryota"/>
</dbReference>
<dbReference type="HOGENOM" id="CLU_004633_1_0_1"/>
<dbReference type="InParanoid" id="B4JEF2"/>
<dbReference type="OMA" id="CGLMEGK"/>
<dbReference type="OrthoDB" id="9998697at2759"/>
<dbReference type="PhylomeDB" id="B4JEF2"/>
<dbReference type="Proteomes" id="UP000001070">
    <property type="component" value="Unassembled WGS sequence"/>
</dbReference>
<dbReference type="GO" id="GO:0009986">
    <property type="term" value="C:cell surface"/>
    <property type="evidence" value="ECO:0007669"/>
    <property type="project" value="EnsemblMetazoa"/>
</dbReference>
<dbReference type="GO" id="GO:0035230">
    <property type="term" value="C:cytoneme"/>
    <property type="evidence" value="ECO:0007669"/>
    <property type="project" value="EnsemblMetazoa"/>
</dbReference>
<dbReference type="GO" id="GO:0016020">
    <property type="term" value="C:membrane"/>
    <property type="evidence" value="ECO:0000250"/>
    <property type="project" value="UniProtKB"/>
</dbReference>
<dbReference type="GO" id="GO:0005886">
    <property type="term" value="C:plasma membrane"/>
    <property type="evidence" value="ECO:0007669"/>
    <property type="project" value="EnsemblMetazoa"/>
</dbReference>
<dbReference type="GO" id="GO:0015026">
    <property type="term" value="F:coreceptor activity"/>
    <property type="evidence" value="ECO:0007669"/>
    <property type="project" value="EnsemblMetazoa"/>
</dbReference>
<dbReference type="GO" id="GO:0097108">
    <property type="term" value="F:hedgehog family protein binding"/>
    <property type="evidence" value="ECO:0007669"/>
    <property type="project" value="EnsemblMetazoa"/>
</dbReference>
<dbReference type="GO" id="GO:0008201">
    <property type="term" value="F:heparin binding"/>
    <property type="evidence" value="ECO:0000250"/>
    <property type="project" value="UniProtKB"/>
</dbReference>
<dbReference type="GO" id="GO:0005113">
    <property type="term" value="F:patched binding"/>
    <property type="evidence" value="ECO:0007669"/>
    <property type="project" value="EnsemblMetazoa"/>
</dbReference>
<dbReference type="GO" id="GO:0042803">
    <property type="term" value="F:protein homodimerization activity"/>
    <property type="evidence" value="ECO:0000250"/>
    <property type="project" value="UniProtKB"/>
</dbReference>
<dbReference type="GO" id="GO:0048749">
    <property type="term" value="P:compound eye development"/>
    <property type="evidence" value="ECO:0007669"/>
    <property type="project" value="EnsemblMetazoa"/>
</dbReference>
<dbReference type="GO" id="GO:0035017">
    <property type="term" value="P:cuticle pattern formation"/>
    <property type="evidence" value="ECO:0007669"/>
    <property type="project" value="EnsemblMetazoa"/>
</dbReference>
<dbReference type="GO" id="GO:0007156">
    <property type="term" value="P:homophilic cell adhesion via plasma membrane adhesion molecules"/>
    <property type="evidence" value="ECO:0007669"/>
    <property type="project" value="TreeGrafter"/>
</dbReference>
<dbReference type="GO" id="GO:0034109">
    <property type="term" value="P:homotypic cell-cell adhesion"/>
    <property type="evidence" value="ECO:0007669"/>
    <property type="project" value="EnsemblMetazoa"/>
</dbReference>
<dbReference type="GO" id="GO:0071694">
    <property type="term" value="P:maintenance of protein location in extracellular region"/>
    <property type="evidence" value="ECO:0007669"/>
    <property type="project" value="EnsemblMetazoa"/>
</dbReference>
<dbReference type="GO" id="GO:0007379">
    <property type="term" value="P:segment specification"/>
    <property type="evidence" value="ECO:0007669"/>
    <property type="project" value="EnsemblMetazoa"/>
</dbReference>
<dbReference type="GO" id="GO:0007224">
    <property type="term" value="P:smoothened signaling pathway"/>
    <property type="evidence" value="ECO:0000250"/>
    <property type="project" value="UniProtKB"/>
</dbReference>
<dbReference type="GO" id="GO:0048100">
    <property type="term" value="P:wing disc anterior/posterior pattern formation"/>
    <property type="evidence" value="ECO:0007669"/>
    <property type="project" value="EnsemblMetazoa"/>
</dbReference>
<dbReference type="CDD" id="cd00063">
    <property type="entry name" value="FN3"/>
    <property type="match status" value="2"/>
</dbReference>
<dbReference type="CDD" id="cd00096">
    <property type="entry name" value="Ig"/>
    <property type="match status" value="2"/>
</dbReference>
<dbReference type="FunFam" id="2.60.40.10:FF:001747">
    <property type="entry name" value="Interference hedgehog"/>
    <property type="match status" value="1"/>
</dbReference>
<dbReference type="FunFam" id="2.60.40.10:FF:001773">
    <property type="entry name" value="Interference hedgehog"/>
    <property type="match status" value="1"/>
</dbReference>
<dbReference type="FunFam" id="2.60.40.10:FF:002071">
    <property type="entry name" value="Interference hedgehog"/>
    <property type="match status" value="1"/>
</dbReference>
<dbReference type="Gene3D" id="2.60.40.10">
    <property type="entry name" value="Immunoglobulins"/>
    <property type="match status" value="6"/>
</dbReference>
<dbReference type="InterPro" id="IPR050958">
    <property type="entry name" value="Cell_Adh-Cytoskel_Orgn"/>
</dbReference>
<dbReference type="InterPro" id="IPR003961">
    <property type="entry name" value="FN3_dom"/>
</dbReference>
<dbReference type="InterPro" id="IPR036116">
    <property type="entry name" value="FN3_sf"/>
</dbReference>
<dbReference type="InterPro" id="IPR007110">
    <property type="entry name" value="Ig-like_dom"/>
</dbReference>
<dbReference type="InterPro" id="IPR036179">
    <property type="entry name" value="Ig-like_dom_sf"/>
</dbReference>
<dbReference type="InterPro" id="IPR013783">
    <property type="entry name" value="Ig-like_fold"/>
</dbReference>
<dbReference type="InterPro" id="IPR003599">
    <property type="entry name" value="Ig_sub"/>
</dbReference>
<dbReference type="InterPro" id="IPR003598">
    <property type="entry name" value="Ig_sub2"/>
</dbReference>
<dbReference type="PANTHER" id="PTHR45080">
    <property type="entry name" value="CONTACTIN 5"/>
    <property type="match status" value="1"/>
</dbReference>
<dbReference type="PANTHER" id="PTHR45080:SF8">
    <property type="entry name" value="IG-LIKE DOMAIN-CONTAINING PROTEIN"/>
    <property type="match status" value="1"/>
</dbReference>
<dbReference type="Pfam" id="PF00041">
    <property type="entry name" value="fn3"/>
    <property type="match status" value="2"/>
</dbReference>
<dbReference type="Pfam" id="PF13927">
    <property type="entry name" value="Ig_3"/>
    <property type="match status" value="2"/>
</dbReference>
<dbReference type="SMART" id="SM00060">
    <property type="entry name" value="FN3"/>
    <property type="match status" value="2"/>
</dbReference>
<dbReference type="SMART" id="SM00409">
    <property type="entry name" value="IG"/>
    <property type="match status" value="4"/>
</dbReference>
<dbReference type="SMART" id="SM00408">
    <property type="entry name" value="IGc2"/>
    <property type="match status" value="3"/>
</dbReference>
<dbReference type="SUPFAM" id="SSF49265">
    <property type="entry name" value="Fibronectin type III"/>
    <property type="match status" value="1"/>
</dbReference>
<dbReference type="SUPFAM" id="SSF48726">
    <property type="entry name" value="Immunoglobulin"/>
    <property type="match status" value="4"/>
</dbReference>
<dbReference type="PROSITE" id="PS50853">
    <property type="entry name" value="FN3"/>
    <property type="match status" value="2"/>
</dbReference>
<dbReference type="PROSITE" id="PS50835">
    <property type="entry name" value="IG_LIKE"/>
    <property type="match status" value="4"/>
</dbReference>
<gene>
    <name evidence="1" type="primary">iHog</name>
    <name type="ORF">GH11362</name>
</gene>
<sequence>MSLTRFSLCLLLTLLLAAIPVYLASPDPGVRILRSPESTVAPPGDEVVFVCETSLPPEHFEWSYASSRSRFRYLKSGNHNISITHDNDISKLRVVVSLETLGEYRCVAWFGPLAVTSTTARLELAALSGGGGDEGFKGNQAHWRVTAGNTVQWHCGHIESNPAPSWSFYYNDIELPAASTLSDSNGTLLLSNVSVASSGSYRCVATNTASGVRLALPSRLELQVSAEAMPATAPHLLDGQRVRTKVARVGESVLLLCPGVGCPSPTAIWSSPNVPGAIKNNRTRVLPYGLQINELQALDGGTYICYLDNGIRPALKHSIQLLVQQAPRIVLAPSANLTNEGEAMQLECVATGIPEPEIYWLLNGNNSANDSKANPGSNGILILQSVQKRHAGYVQCFARNSLGEDSAGTILQVNPTQIQTGDGGGGSRAYVRPQQHMFGRKQKQQTQMVPPSAPNVTRLSDESVMLRWHVMPNEGLPIKFFKVQYRMLTGTGKSWQTTNENIPYGKERNDYGAVKNFTSSVTGLRPDRRYRFRIMAVYSNNDNKESNTSGKFFLQRGATLAPLAVPSLVDIEEYSQTAVVLHWDLTSDADEDLISGYYAYYRPSASAGEYLKATIDGAKSRSFQISALEPGTIYEFKLQSFSAVAASEFSALKQGRTQRPRVSTTTEPAVHAMDTTTPSHNETFNLNPLLTGTIGGGALLVLLVVSACLCLCRRRSSRGTNQQNKPRLAELREDFVPLNTCSPNKPRTRHLHITLNPLAQQQQQQQQQQQQQQQQQHEEKDTQDNDMSYFQRPPVVYDAEALGFNGMARMSSSSLRRSQRTLERAAAAGGGAGSGTNNNNLNQPTDGSTADSPRLQASNKPGRVILKRARLSSRSENLSSGSLNSVGV</sequence>
<organism>
    <name type="scientific">Drosophila grimshawi</name>
    <name type="common">Hawaiian fruit fly</name>
    <name type="synonym">Idiomyia grimshawi</name>
    <dbReference type="NCBI Taxonomy" id="7222"/>
    <lineage>
        <taxon>Eukaryota</taxon>
        <taxon>Metazoa</taxon>
        <taxon>Ecdysozoa</taxon>
        <taxon>Arthropoda</taxon>
        <taxon>Hexapoda</taxon>
        <taxon>Insecta</taxon>
        <taxon>Pterygota</taxon>
        <taxon>Neoptera</taxon>
        <taxon>Endopterygota</taxon>
        <taxon>Diptera</taxon>
        <taxon>Brachycera</taxon>
        <taxon>Muscomorpha</taxon>
        <taxon>Ephydroidea</taxon>
        <taxon>Drosophilidae</taxon>
        <taxon>Drosophila</taxon>
        <taxon>Hawaiian Drosophila</taxon>
    </lineage>
</organism>
<comment type="function">
    <text evidence="1">Mediates response to the active Hedgehog (Hh) protein signal in embryos, functioning upstream or at the level of patched (ptc).</text>
</comment>
<comment type="subunit">
    <text evidence="1">Homodimer. Heterotetramer; 2 iHog chains bind 2 hh chains when facilitated by heparin, heparin is required to promote high-affinity interactions between hh and iHog (By similarity).</text>
</comment>
<comment type="subcellular location">
    <subcellularLocation>
        <location evidence="2">Membrane</location>
        <topology evidence="1 2">Single-pass type I membrane protein</topology>
    </subcellularLocation>
</comment>
<comment type="domain">
    <text evidence="1">The first fibronectin type-III domain mediates a specific interaction with Hh protein, in vitro. The second fibronectin type-III domain is additionally required for in vivo signaling activity (By similarity).</text>
</comment>
<comment type="similarity">
    <text evidence="2 6">Belongs to the immunoglobulin superfamily. IHOG family.</text>
</comment>
<evidence type="ECO:0000250" key="1">
    <source>
        <dbReference type="UniProtKB" id="Q9VM64"/>
    </source>
</evidence>
<evidence type="ECO:0000255" key="2"/>
<evidence type="ECO:0000255" key="3">
    <source>
        <dbReference type="PROSITE-ProRule" id="PRU00114"/>
    </source>
</evidence>
<evidence type="ECO:0000255" key="4">
    <source>
        <dbReference type="PROSITE-ProRule" id="PRU00316"/>
    </source>
</evidence>
<evidence type="ECO:0000256" key="5">
    <source>
        <dbReference type="SAM" id="MobiDB-lite"/>
    </source>
</evidence>
<evidence type="ECO:0000305" key="6"/>
<evidence type="ECO:0000312" key="7">
    <source>
        <dbReference type="EMBL" id="EDW03672.1"/>
    </source>
</evidence>
<accession>B4JEF2</accession>
<protein>
    <recommendedName>
        <fullName evidence="1">Interference hedgehog</fullName>
    </recommendedName>
</protein>
<feature type="signal peptide" evidence="2">
    <location>
        <begin position="1"/>
        <end position="24"/>
    </location>
</feature>
<feature type="chain" id="PRO_0000383614" description="Interference hedgehog" evidence="2">
    <location>
        <begin position="25"/>
        <end position="888"/>
    </location>
</feature>
<feature type="topological domain" description="Extracellular" evidence="2">
    <location>
        <begin position="25"/>
        <end position="688"/>
    </location>
</feature>
<feature type="transmembrane region" description="Helical" evidence="2">
    <location>
        <begin position="689"/>
        <end position="709"/>
    </location>
</feature>
<feature type="topological domain" description="Cytoplasmic" evidence="2">
    <location>
        <begin position="710"/>
        <end position="888"/>
    </location>
</feature>
<feature type="domain" description="Ig-like C2-type 1" evidence="2">
    <location>
        <begin position="28"/>
        <end position="123"/>
    </location>
</feature>
<feature type="domain" description="Ig-like C2-type 2" evidence="2">
    <location>
        <begin position="134"/>
        <end position="215"/>
    </location>
</feature>
<feature type="domain" description="Ig-like C2-type 3" evidence="2">
    <location>
        <begin position="234"/>
        <end position="321"/>
    </location>
</feature>
<feature type="domain" description="Ig-like C2-type 4" evidence="2">
    <location>
        <begin position="327"/>
        <end position="414"/>
    </location>
</feature>
<feature type="domain" description="Fibronectin type-III 1" evidence="4">
    <location>
        <begin position="450"/>
        <end position="557"/>
    </location>
</feature>
<feature type="domain" description="Fibronectin type-III 2" evidence="4">
    <location>
        <begin position="565"/>
        <end position="660"/>
    </location>
</feature>
<feature type="region of interest" description="Disordered" evidence="5">
    <location>
        <begin position="655"/>
        <end position="679"/>
    </location>
</feature>
<feature type="region of interest" description="Disordered" evidence="5">
    <location>
        <begin position="759"/>
        <end position="789"/>
    </location>
</feature>
<feature type="region of interest" description="Disordered" evidence="5">
    <location>
        <begin position="812"/>
        <end position="864"/>
    </location>
</feature>
<feature type="region of interest" description="Disordered" evidence="5">
    <location>
        <begin position="869"/>
        <end position="888"/>
    </location>
</feature>
<feature type="compositionally biased region" description="Polar residues" evidence="5">
    <location>
        <begin position="655"/>
        <end position="667"/>
    </location>
</feature>
<feature type="compositionally biased region" description="Low complexity" evidence="5">
    <location>
        <begin position="760"/>
        <end position="775"/>
    </location>
</feature>
<feature type="compositionally biased region" description="Polar residues" evidence="5">
    <location>
        <begin position="843"/>
        <end position="859"/>
    </location>
</feature>
<feature type="compositionally biased region" description="Low complexity" evidence="5">
    <location>
        <begin position="872"/>
        <end position="888"/>
    </location>
</feature>
<feature type="binding site" evidence="1">
    <location>
        <position position="486"/>
    </location>
    <ligand>
        <name>heparin</name>
        <dbReference type="ChEBI" id="CHEBI:28304"/>
    </ligand>
</feature>
<feature type="binding site" evidence="1">
    <location>
        <position position="493"/>
    </location>
    <ligand>
        <name>heparin</name>
        <dbReference type="ChEBI" id="CHEBI:28304"/>
    </ligand>
</feature>
<feature type="binding site" evidence="1">
    <location>
        <position position="531"/>
    </location>
    <ligand>
        <name>heparin</name>
        <dbReference type="ChEBI" id="CHEBI:28304"/>
    </ligand>
</feature>
<feature type="glycosylation site" description="N-linked (GlcNAc...) asparagine" evidence="2">
    <location>
        <position position="80"/>
    </location>
</feature>
<feature type="glycosylation site" description="N-linked (GlcNAc...) asparagine" evidence="2">
    <location>
        <position position="185"/>
    </location>
</feature>
<feature type="glycosylation site" description="N-linked (GlcNAc...) asparagine" evidence="2">
    <location>
        <position position="192"/>
    </location>
</feature>
<feature type="glycosylation site" description="N-linked (GlcNAc...) asparagine" evidence="2">
    <location>
        <position position="281"/>
    </location>
</feature>
<feature type="glycosylation site" description="N-linked (GlcNAc...) asparagine" evidence="2">
    <location>
        <position position="336"/>
    </location>
</feature>
<feature type="glycosylation site" description="N-linked (GlcNAc...) asparagine" evidence="2">
    <location>
        <position position="365"/>
    </location>
</feature>
<feature type="glycosylation site" description="N-linked (GlcNAc...) asparagine" evidence="2">
    <location>
        <position position="369"/>
    </location>
</feature>
<feature type="glycosylation site" description="N-linked (GlcNAc...) asparagine" evidence="2">
    <location>
        <position position="455"/>
    </location>
</feature>
<feature type="glycosylation site" description="N-linked (GlcNAc...) asparagine" evidence="2">
    <location>
        <position position="516"/>
    </location>
</feature>
<feature type="glycosylation site" description="N-linked (GlcNAc...) asparagine" evidence="2">
    <location>
        <position position="547"/>
    </location>
</feature>
<feature type="glycosylation site" description="N-linked (GlcNAc...) asparagine" evidence="2">
    <location>
        <position position="681"/>
    </location>
</feature>
<feature type="disulfide bond" evidence="3">
    <location>
        <begin position="51"/>
        <end position="106"/>
    </location>
</feature>
<feature type="disulfide bond" evidence="3">
    <location>
        <begin position="155"/>
        <end position="203"/>
    </location>
</feature>
<feature type="disulfide bond" evidence="3">
    <location>
        <begin position="257"/>
        <end position="305"/>
    </location>
</feature>
<feature type="disulfide bond" evidence="3">
    <location>
        <begin position="348"/>
        <end position="396"/>
    </location>
</feature>
<name>IHOG_DROGR</name>
<proteinExistence type="inferred from homology"/>